<evidence type="ECO:0000255" key="1">
    <source>
        <dbReference type="HAMAP-Rule" id="MF_01309"/>
    </source>
</evidence>
<evidence type="ECO:0000305" key="2"/>
<accession>B8IYH8</accession>
<name>RS3_DESDA</name>
<protein>
    <recommendedName>
        <fullName evidence="1">Small ribosomal subunit protein uS3</fullName>
    </recommendedName>
    <alternativeName>
        <fullName evidence="2">30S ribosomal protein S3</fullName>
    </alternativeName>
</protein>
<sequence length="213" mass="24540">MGQKVHPFGFRLGYNKNWQSRWFSKKEYPAFVYEDSKIRAFVKKLLYHAGLSKIEIERAGGKVRLILSTARPGIVIGRKGVEIEKLRNDLRQKFGREFSLEVNEIRRPEVDAQLVAENIAQQLERRVAFRRAMKRTVSMARKFGGEGIKVTCSGRLAGAEIARTEWYRDGRVPLQTLRADIDYGFAEARTTYGIIGVKVWIYKGEILDKEVDQ</sequence>
<reference key="1">
    <citation type="submission" date="2009-01" db="EMBL/GenBank/DDBJ databases">
        <title>Complete sequence of Desulfovibrio desulfuricans subsp. desulfuricans str. ATCC 27774.</title>
        <authorList>
            <consortium name="US DOE Joint Genome Institute"/>
            <person name="Lucas S."/>
            <person name="Copeland A."/>
            <person name="Lapidus A."/>
            <person name="Glavina del Rio T."/>
            <person name="Tice H."/>
            <person name="Bruce D."/>
            <person name="Goodwin L."/>
            <person name="Pitluck S."/>
            <person name="Sims D."/>
            <person name="Lu M."/>
            <person name="Kiss H."/>
            <person name="Meineke L."/>
            <person name="Brettin T."/>
            <person name="Detter J.C."/>
            <person name="Han C."/>
            <person name="Larimer F."/>
            <person name="Land M."/>
            <person name="Hauser L."/>
            <person name="Kyrpides N."/>
            <person name="Ovchinnikova G."/>
            <person name="Hazen T.C."/>
        </authorList>
    </citation>
    <scope>NUCLEOTIDE SEQUENCE [LARGE SCALE GENOMIC DNA]</scope>
    <source>
        <strain>ATCC 27774 / DSM 6949 / MB</strain>
    </source>
</reference>
<organism>
    <name type="scientific">Desulfovibrio desulfuricans (strain ATCC 27774 / DSM 6949 / MB)</name>
    <dbReference type="NCBI Taxonomy" id="525146"/>
    <lineage>
        <taxon>Bacteria</taxon>
        <taxon>Pseudomonadati</taxon>
        <taxon>Thermodesulfobacteriota</taxon>
        <taxon>Desulfovibrionia</taxon>
        <taxon>Desulfovibrionales</taxon>
        <taxon>Desulfovibrionaceae</taxon>
        <taxon>Desulfovibrio</taxon>
    </lineage>
</organism>
<gene>
    <name evidence="1" type="primary">rpsC</name>
    <name type="ordered locus">Ddes_0666</name>
</gene>
<comment type="function">
    <text evidence="1">Binds the lower part of the 30S subunit head. Binds mRNA in the 70S ribosome, positioning it for translation.</text>
</comment>
<comment type="subunit">
    <text evidence="1">Part of the 30S ribosomal subunit. Forms a tight complex with proteins S10 and S14.</text>
</comment>
<comment type="similarity">
    <text evidence="1">Belongs to the universal ribosomal protein uS3 family.</text>
</comment>
<dbReference type="EMBL" id="CP001358">
    <property type="protein sequence ID" value="ACL48574.1"/>
    <property type="molecule type" value="Genomic_DNA"/>
</dbReference>
<dbReference type="SMR" id="B8IYH8"/>
<dbReference type="STRING" id="525146.Ddes_0666"/>
<dbReference type="KEGG" id="dds:Ddes_0666"/>
<dbReference type="eggNOG" id="COG0092">
    <property type="taxonomic scope" value="Bacteria"/>
</dbReference>
<dbReference type="HOGENOM" id="CLU_058591_0_2_7"/>
<dbReference type="GO" id="GO:0022627">
    <property type="term" value="C:cytosolic small ribosomal subunit"/>
    <property type="evidence" value="ECO:0007669"/>
    <property type="project" value="TreeGrafter"/>
</dbReference>
<dbReference type="GO" id="GO:0003729">
    <property type="term" value="F:mRNA binding"/>
    <property type="evidence" value="ECO:0007669"/>
    <property type="project" value="UniProtKB-UniRule"/>
</dbReference>
<dbReference type="GO" id="GO:0019843">
    <property type="term" value="F:rRNA binding"/>
    <property type="evidence" value="ECO:0007669"/>
    <property type="project" value="UniProtKB-UniRule"/>
</dbReference>
<dbReference type="GO" id="GO:0003735">
    <property type="term" value="F:structural constituent of ribosome"/>
    <property type="evidence" value="ECO:0007669"/>
    <property type="project" value="InterPro"/>
</dbReference>
<dbReference type="GO" id="GO:0006412">
    <property type="term" value="P:translation"/>
    <property type="evidence" value="ECO:0007669"/>
    <property type="project" value="UniProtKB-UniRule"/>
</dbReference>
<dbReference type="CDD" id="cd02412">
    <property type="entry name" value="KH-II_30S_S3"/>
    <property type="match status" value="1"/>
</dbReference>
<dbReference type="FunFam" id="3.30.1140.32:FF:000002">
    <property type="entry name" value="30S ribosomal protein S3"/>
    <property type="match status" value="1"/>
</dbReference>
<dbReference type="FunFam" id="3.30.300.20:FF:000001">
    <property type="entry name" value="30S ribosomal protein S3"/>
    <property type="match status" value="1"/>
</dbReference>
<dbReference type="Gene3D" id="3.30.300.20">
    <property type="match status" value="1"/>
</dbReference>
<dbReference type="Gene3D" id="3.30.1140.32">
    <property type="entry name" value="Ribosomal protein S3, C-terminal domain"/>
    <property type="match status" value="1"/>
</dbReference>
<dbReference type="HAMAP" id="MF_01309_B">
    <property type="entry name" value="Ribosomal_uS3_B"/>
    <property type="match status" value="1"/>
</dbReference>
<dbReference type="InterPro" id="IPR004087">
    <property type="entry name" value="KH_dom"/>
</dbReference>
<dbReference type="InterPro" id="IPR015946">
    <property type="entry name" value="KH_dom-like_a/b"/>
</dbReference>
<dbReference type="InterPro" id="IPR004044">
    <property type="entry name" value="KH_dom_type_2"/>
</dbReference>
<dbReference type="InterPro" id="IPR009019">
    <property type="entry name" value="KH_sf_prok-type"/>
</dbReference>
<dbReference type="InterPro" id="IPR036419">
    <property type="entry name" value="Ribosomal_S3_C_sf"/>
</dbReference>
<dbReference type="InterPro" id="IPR005704">
    <property type="entry name" value="Ribosomal_uS3_bac-typ"/>
</dbReference>
<dbReference type="InterPro" id="IPR001351">
    <property type="entry name" value="Ribosomal_uS3_C"/>
</dbReference>
<dbReference type="InterPro" id="IPR018280">
    <property type="entry name" value="Ribosomal_uS3_CS"/>
</dbReference>
<dbReference type="NCBIfam" id="TIGR01009">
    <property type="entry name" value="rpsC_bact"/>
    <property type="match status" value="1"/>
</dbReference>
<dbReference type="PANTHER" id="PTHR11760">
    <property type="entry name" value="30S/40S RIBOSOMAL PROTEIN S3"/>
    <property type="match status" value="1"/>
</dbReference>
<dbReference type="PANTHER" id="PTHR11760:SF19">
    <property type="entry name" value="SMALL RIBOSOMAL SUBUNIT PROTEIN US3C"/>
    <property type="match status" value="1"/>
</dbReference>
<dbReference type="Pfam" id="PF07650">
    <property type="entry name" value="KH_2"/>
    <property type="match status" value="1"/>
</dbReference>
<dbReference type="Pfam" id="PF00189">
    <property type="entry name" value="Ribosomal_S3_C"/>
    <property type="match status" value="1"/>
</dbReference>
<dbReference type="SMART" id="SM00322">
    <property type="entry name" value="KH"/>
    <property type="match status" value="1"/>
</dbReference>
<dbReference type="SUPFAM" id="SSF54814">
    <property type="entry name" value="Prokaryotic type KH domain (KH-domain type II)"/>
    <property type="match status" value="1"/>
</dbReference>
<dbReference type="SUPFAM" id="SSF54821">
    <property type="entry name" value="Ribosomal protein S3 C-terminal domain"/>
    <property type="match status" value="1"/>
</dbReference>
<dbReference type="PROSITE" id="PS50823">
    <property type="entry name" value="KH_TYPE_2"/>
    <property type="match status" value="1"/>
</dbReference>
<dbReference type="PROSITE" id="PS00548">
    <property type="entry name" value="RIBOSOMAL_S3"/>
    <property type="match status" value="1"/>
</dbReference>
<proteinExistence type="inferred from homology"/>
<keyword id="KW-0687">Ribonucleoprotein</keyword>
<keyword id="KW-0689">Ribosomal protein</keyword>
<keyword id="KW-0694">RNA-binding</keyword>
<keyword id="KW-0699">rRNA-binding</keyword>
<feature type="chain" id="PRO_1000165492" description="Small ribosomal subunit protein uS3">
    <location>
        <begin position="1"/>
        <end position="213"/>
    </location>
</feature>
<feature type="domain" description="KH type-2" evidence="1">
    <location>
        <begin position="38"/>
        <end position="106"/>
    </location>
</feature>